<protein>
    <recommendedName>
        <fullName evidence="1">Ferrochelatase</fullName>
        <ecNumber evidence="1">4.98.1.1</ecNumber>
    </recommendedName>
    <alternativeName>
        <fullName evidence="1">Heme synthase</fullName>
    </alternativeName>
    <alternativeName>
        <fullName evidence="1">Protoheme ferro-lyase</fullName>
    </alternativeName>
</protein>
<comment type="function">
    <text evidence="1">Catalyzes the ferrous insertion into protoporphyrin IX.</text>
</comment>
<comment type="catalytic activity">
    <reaction evidence="1">
        <text>heme b + 2 H(+) = protoporphyrin IX + Fe(2+)</text>
        <dbReference type="Rhea" id="RHEA:22584"/>
        <dbReference type="ChEBI" id="CHEBI:15378"/>
        <dbReference type="ChEBI" id="CHEBI:29033"/>
        <dbReference type="ChEBI" id="CHEBI:57306"/>
        <dbReference type="ChEBI" id="CHEBI:60344"/>
        <dbReference type="EC" id="4.98.1.1"/>
    </reaction>
</comment>
<comment type="pathway">
    <text evidence="1">Porphyrin-containing compound metabolism; protoheme biosynthesis; protoheme from protoporphyrin-IX: step 1/1.</text>
</comment>
<comment type="subcellular location">
    <subcellularLocation>
        <location evidence="1">Cytoplasm</location>
    </subcellularLocation>
</comment>
<comment type="similarity">
    <text evidence="1">Belongs to the ferrochelatase family.</text>
</comment>
<reference key="1">
    <citation type="journal article" date="2005" name="J. Bacteriol.">
        <title>Genomic sequence of an otitis media isolate of nontypeable Haemophilus influenzae: comparative study with H. influenzae serotype d, strain KW20.</title>
        <authorList>
            <person name="Harrison A."/>
            <person name="Dyer D.W."/>
            <person name="Gillaspy A."/>
            <person name="Ray W.C."/>
            <person name="Mungur R."/>
            <person name="Carson M.B."/>
            <person name="Zhong H."/>
            <person name="Gipson J."/>
            <person name="Gipson M."/>
            <person name="Johnson L.S."/>
            <person name="Lewis L."/>
            <person name="Bakaletz L.O."/>
            <person name="Munson R.S. Jr."/>
        </authorList>
    </citation>
    <scope>NUCLEOTIDE SEQUENCE [LARGE SCALE GENOMIC DNA]</scope>
    <source>
        <strain>86-028NP</strain>
    </source>
</reference>
<organism>
    <name type="scientific">Haemophilus influenzae (strain 86-028NP)</name>
    <dbReference type="NCBI Taxonomy" id="281310"/>
    <lineage>
        <taxon>Bacteria</taxon>
        <taxon>Pseudomonadati</taxon>
        <taxon>Pseudomonadota</taxon>
        <taxon>Gammaproteobacteria</taxon>
        <taxon>Pasteurellales</taxon>
        <taxon>Pasteurellaceae</taxon>
        <taxon>Haemophilus</taxon>
    </lineage>
</organism>
<proteinExistence type="inferred from homology"/>
<feature type="chain" id="PRO_1000019307" description="Ferrochelatase">
    <location>
        <begin position="1"/>
        <end position="323"/>
    </location>
</feature>
<feature type="binding site" evidence="1">
    <location>
        <position position="196"/>
    </location>
    <ligand>
        <name>Fe cation</name>
        <dbReference type="ChEBI" id="CHEBI:24875"/>
    </ligand>
</feature>
<feature type="binding site" evidence="1">
    <location>
        <position position="277"/>
    </location>
    <ligand>
        <name>Fe cation</name>
        <dbReference type="ChEBI" id="CHEBI:24875"/>
    </ligand>
</feature>
<accession>Q4QLD6</accession>
<name>HEMH_HAEI8</name>
<sequence length="323" mass="36948">MTKSAKIGVLLANLGTPDSPTPKSISRYLWQFLTDPRVVDLPRCKWYPLLKAIILPLRSKRIAKNYQAIWTEQGSPLLAISRQQKDALQAYLDTQNINAQVEIAMTYGNPSIQSTVKNLLKNQVERIIVLPLYPQYSSSTTGAVFDAFANALKEERGLVPFDFIHSYHIDENYINALANSIKVRLKSDEFLLFSYHGIPLRYEKMGDYYREHCKQTTIAVVNKLGLTENQWGMTFQSRFGREEWLQPYTDKFLESAATQNIQKIAVICPGFSVDCLETIEEIDKENRENFLTNGGQSYQYIPALNVEHTHIEMMGKLILEKLA</sequence>
<dbReference type="EC" id="4.98.1.1" evidence="1"/>
<dbReference type="EMBL" id="CP000057">
    <property type="protein sequence ID" value="AAX88161.1"/>
    <property type="molecule type" value="Genomic_DNA"/>
</dbReference>
<dbReference type="RefSeq" id="WP_011272415.1">
    <property type="nucleotide sequence ID" value="NC_007146.2"/>
</dbReference>
<dbReference type="SMR" id="Q4QLD6"/>
<dbReference type="GeneID" id="93220167"/>
<dbReference type="KEGG" id="hit:NTHI1329"/>
<dbReference type="HOGENOM" id="CLU_018884_0_0_6"/>
<dbReference type="UniPathway" id="UPA00252">
    <property type="reaction ID" value="UER00325"/>
</dbReference>
<dbReference type="Proteomes" id="UP000002525">
    <property type="component" value="Chromosome"/>
</dbReference>
<dbReference type="GO" id="GO:0005737">
    <property type="term" value="C:cytoplasm"/>
    <property type="evidence" value="ECO:0007669"/>
    <property type="project" value="UniProtKB-SubCell"/>
</dbReference>
<dbReference type="GO" id="GO:0004325">
    <property type="term" value="F:ferrochelatase activity"/>
    <property type="evidence" value="ECO:0007669"/>
    <property type="project" value="UniProtKB-UniRule"/>
</dbReference>
<dbReference type="GO" id="GO:0046872">
    <property type="term" value="F:metal ion binding"/>
    <property type="evidence" value="ECO:0007669"/>
    <property type="project" value="UniProtKB-KW"/>
</dbReference>
<dbReference type="GO" id="GO:0006783">
    <property type="term" value="P:heme biosynthetic process"/>
    <property type="evidence" value="ECO:0007669"/>
    <property type="project" value="UniProtKB-UniRule"/>
</dbReference>
<dbReference type="CDD" id="cd00419">
    <property type="entry name" value="Ferrochelatase_C"/>
    <property type="match status" value="1"/>
</dbReference>
<dbReference type="CDD" id="cd03411">
    <property type="entry name" value="Ferrochelatase_N"/>
    <property type="match status" value="1"/>
</dbReference>
<dbReference type="FunFam" id="3.40.50.1400:FF:000002">
    <property type="entry name" value="Ferrochelatase"/>
    <property type="match status" value="1"/>
</dbReference>
<dbReference type="Gene3D" id="3.40.50.1400">
    <property type="match status" value="2"/>
</dbReference>
<dbReference type="HAMAP" id="MF_00323">
    <property type="entry name" value="Ferrochelatase"/>
    <property type="match status" value="1"/>
</dbReference>
<dbReference type="InterPro" id="IPR001015">
    <property type="entry name" value="Ferrochelatase"/>
</dbReference>
<dbReference type="InterPro" id="IPR019772">
    <property type="entry name" value="Ferrochelatase_AS"/>
</dbReference>
<dbReference type="InterPro" id="IPR033644">
    <property type="entry name" value="Ferrochelatase_C"/>
</dbReference>
<dbReference type="InterPro" id="IPR033659">
    <property type="entry name" value="Ferrochelatase_N"/>
</dbReference>
<dbReference type="NCBIfam" id="TIGR00109">
    <property type="entry name" value="hemH"/>
    <property type="match status" value="1"/>
</dbReference>
<dbReference type="PANTHER" id="PTHR11108">
    <property type="entry name" value="FERROCHELATASE"/>
    <property type="match status" value="1"/>
</dbReference>
<dbReference type="PANTHER" id="PTHR11108:SF1">
    <property type="entry name" value="FERROCHELATASE, MITOCHONDRIAL"/>
    <property type="match status" value="1"/>
</dbReference>
<dbReference type="Pfam" id="PF00762">
    <property type="entry name" value="Ferrochelatase"/>
    <property type="match status" value="1"/>
</dbReference>
<dbReference type="SUPFAM" id="SSF53800">
    <property type="entry name" value="Chelatase"/>
    <property type="match status" value="1"/>
</dbReference>
<dbReference type="PROSITE" id="PS00534">
    <property type="entry name" value="FERROCHELATASE"/>
    <property type="match status" value="1"/>
</dbReference>
<gene>
    <name evidence="1" type="primary">hemH</name>
    <name type="ordered locus">NTHI1329</name>
</gene>
<evidence type="ECO:0000255" key="1">
    <source>
        <dbReference type="HAMAP-Rule" id="MF_00323"/>
    </source>
</evidence>
<keyword id="KW-0963">Cytoplasm</keyword>
<keyword id="KW-0350">Heme biosynthesis</keyword>
<keyword id="KW-0408">Iron</keyword>
<keyword id="KW-0456">Lyase</keyword>
<keyword id="KW-0479">Metal-binding</keyword>
<keyword id="KW-0627">Porphyrin biosynthesis</keyword>